<reference key="1">
    <citation type="journal article" date="2003" name="Nature">
        <title>The genome sequence of Bacillus anthracis Ames and comparison to closely related bacteria.</title>
        <authorList>
            <person name="Read T.D."/>
            <person name="Peterson S.N."/>
            <person name="Tourasse N.J."/>
            <person name="Baillie L.W."/>
            <person name="Paulsen I.T."/>
            <person name="Nelson K.E."/>
            <person name="Tettelin H."/>
            <person name="Fouts D.E."/>
            <person name="Eisen J.A."/>
            <person name="Gill S.R."/>
            <person name="Holtzapple E.K."/>
            <person name="Okstad O.A."/>
            <person name="Helgason E."/>
            <person name="Rilstone J."/>
            <person name="Wu M."/>
            <person name="Kolonay J.F."/>
            <person name="Beanan M.J."/>
            <person name="Dodson R.J."/>
            <person name="Brinkac L.M."/>
            <person name="Gwinn M.L."/>
            <person name="DeBoy R.T."/>
            <person name="Madpu R."/>
            <person name="Daugherty S.C."/>
            <person name="Durkin A.S."/>
            <person name="Haft D.H."/>
            <person name="Nelson W.C."/>
            <person name="Peterson J.D."/>
            <person name="Pop M."/>
            <person name="Khouri H.M."/>
            <person name="Radune D."/>
            <person name="Benton J.L."/>
            <person name="Mahamoud Y."/>
            <person name="Jiang L."/>
            <person name="Hance I.R."/>
            <person name="Weidman J.F."/>
            <person name="Berry K.J."/>
            <person name="Plaut R.D."/>
            <person name="Wolf A.M."/>
            <person name="Watkins K.L."/>
            <person name="Nierman W.C."/>
            <person name="Hazen A."/>
            <person name="Cline R.T."/>
            <person name="Redmond C."/>
            <person name="Thwaite J.E."/>
            <person name="White O."/>
            <person name="Salzberg S.L."/>
            <person name="Thomason B."/>
            <person name="Friedlander A.M."/>
            <person name="Koehler T.M."/>
            <person name="Hanna P.C."/>
            <person name="Kolstoe A.-B."/>
            <person name="Fraser C.M."/>
        </authorList>
    </citation>
    <scope>NUCLEOTIDE SEQUENCE [LARGE SCALE GENOMIC DNA]</scope>
    <source>
        <strain>Ames / isolate Porton</strain>
    </source>
</reference>
<reference key="2">
    <citation type="journal article" date="2009" name="J. Bacteriol.">
        <title>The complete genome sequence of Bacillus anthracis Ames 'Ancestor'.</title>
        <authorList>
            <person name="Ravel J."/>
            <person name="Jiang L."/>
            <person name="Stanley S.T."/>
            <person name="Wilson M.R."/>
            <person name="Decker R.S."/>
            <person name="Read T.D."/>
            <person name="Worsham P."/>
            <person name="Keim P.S."/>
            <person name="Salzberg S.L."/>
            <person name="Fraser-Liggett C.M."/>
            <person name="Rasko D.A."/>
        </authorList>
    </citation>
    <scope>NUCLEOTIDE SEQUENCE [LARGE SCALE GENOMIC DNA]</scope>
    <source>
        <strain>Ames ancestor</strain>
    </source>
</reference>
<reference key="3">
    <citation type="submission" date="2004-01" db="EMBL/GenBank/DDBJ databases">
        <title>Complete genome sequence of Bacillus anthracis Sterne.</title>
        <authorList>
            <person name="Brettin T.S."/>
            <person name="Bruce D."/>
            <person name="Challacombe J.F."/>
            <person name="Gilna P."/>
            <person name="Han C."/>
            <person name="Hill K."/>
            <person name="Hitchcock P."/>
            <person name="Jackson P."/>
            <person name="Keim P."/>
            <person name="Longmire J."/>
            <person name="Lucas S."/>
            <person name="Okinaka R."/>
            <person name="Richardson P."/>
            <person name="Rubin E."/>
            <person name="Tice H."/>
        </authorList>
    </citation>
    <scope>NUCLEOTIDE SEQUENCE [LARGE SCALE GENOMIC DNA]</scope>
    <source>
        <strain>Sterne</strain>
    </source>
</reference>
<dbReference type="EC" id="6.1.1.23" evidence="1"/>
<dbReference type="EMBL" id="AE016879">
    <property type="protein sequence ID" value="AAP28335.1"/>
    <property type="molecule type" value="Genomic_DNA"/>
</dbReference>
<dbReference type="EMBL" id="AE017334">
    <property type="protein sequence ID" value="AAT33754.1"/>
    <property type="molecule type" value="Genomic_DNA"/>
</dbReference>
<dbReference type="EMBL" id="AE017225">
    <property type="protein sequence ID" value="AAT56596.1"/>
    <property type="molecule type" value="Genomic_DNA"/>
</dbReference>
<dbReference type="RefSeq" id="NP_846849.1">
    <property type="nucleotide sequence ID" value="NC_003997.3"/>
</dbReference>
<dbReference type="RefSeq" id="WP_000840916.1">
    <property type="nucleotide sequence ID" value="NZ_WXXJ01000027.1"/>
</dbReference>
<dbReference type="RefSeq" id="YP_030545.1">
    <property type="nucleotide sequence ID" value="NC_005945.1"/>
</dbReference>
<dbReference type="SMR" id="Q81LI7"/>
<dbReference type="IntAct" id="Q81LI7">
    <property type="interactions" value="3"/>
</dbReference>
<dbReference type="STRING" id="261594.GBAA_4632"/>
<dbReference type="DNASU" id="1085460"/>
<dbReference type="GeneID" id="45024275"/>
<dbReference type="KEGG" id="ban:BA_4632"/>
<dbReference type="KEGG" id="bar:GBAA_4632"/>
<dbReference type="KEGG" id="bat:BAS4297"/>
<dbReference type="PATRIC" id="fig|198094.11.peg.4597"/>
<dbReference type="eggNOG" id="COG0173">
    <property type="taxonomic scope" value="Bacteria"/>
</dbReference>
<dbReference type="HOGENOM" id="CLU_014330_3_2_9"/>
<dbReference type="OMA" id="LCGWVDR"/>
<dbReference type="OrthoDB" id="9802326at2"/>
<dbReference type="Proteomes" id="UP000000427">
    <property type="component" value="Chromosome"/>
</dbReference>
<dbReference type="Proteomes" id="UP000000594">
    <property type="component" value="Chromosome"/>
</dbReference>
<dbReference type="GO" id="GO:0005737">
    <property type="term" value="C:cytoplasm"/>
    <property type="evidence" value="ECO:0007669"/>
    <property type="project" value="UniProtKB-SubCell"/>
</dbReference>
<dbReference type="GO" id="GO:0004815">
    <property type="term" value="F:aspartate-tRNA ligase activity"/>
    <property type="evidence" value="ECO:0007669"/>
    <property type="project" value="UniProtKB-UniRule"/>
</dbReference>
<dbReference type="GO" id="GO:0050560">
    <property type="term" value="F:aspartate-tRNA(Asn) ligase activity"/>
    <property type="evidence" value="ECO:0007669"/>
    <property type="project" value="UniProtKB-EC"/>
</dbReference>
<dbReference type="GO" id="GO:0005524">
    <property type="term" value="F:ATP binding"/>
    <property type="evidence" value="ECO:0007669"/>
    <property type="project" value="UniProtKB-UniRule"/>
</dbReference>
<dbReference type="GO" id="GO:0140096">
    <property type="term" value="F:catalytic activity, acting on a protein"/>
    <property type="evidence" value="ECO:0007669"/>
    <property type="project" value="UniProtKB-ARBA"/>
</dbReference>
<dbReference type="GO" id="GO:0003676">
    <property type="term" value="F:nucleic acid binding"/>
    <property type="evidence" value="ECO:0007669"/>
    <property type="project" value="InterPro"/>
</dbReference>
<dbReference type="GO" id="GO:0016740">
    <property type="term" value="F:transferase activity"/>
    <property type="evidence" value="ECO:0007669"/>
    <property type="project" value="UniProtKB-ARBA"/>
</dbReference>
<dbReference type="GO" id="GO:0006422">
    <property type="term" value="P:aspartyl-tRNA aminoacylation"/>
    <property type="evidence" value="ECO:0007669"/>
    <property type="project" value="UniProtKB-UniRule"/>
</dbReference>
<dbReference type="CDD" id="cd00777">
    <property type="entry name" value="AspRS_core"/>
    <property type="match status" value="1"/>
</dbReference>
<dbReference type="CDD" id="cd04317">
    <property type="entry name" value="EcAspRS_like_N"/>
    <property type="match status" value="1"/>
</dbReference>
<dbReference type="Gene3D" id="3.30.930.10">
    <property type="entry name" value="Bira Bifunctional Protein, Domain 2"/>
    <property type="match status" value="1"/>
</dbReference>
<dbReference type="Gene3D" id="3.30.1360.30">
    <property type="entry name" value="GAD-like domain"/>
    <property type="match status" value="1"/>
</dbReference>
<dbReference type="Gene3D" id="2.40.50.140">
    <property type="entry name" value="Nucleic acid-binding proteins"/>
    <property type="match status" value="1"/>
</dbReference>
<dbReference type="HAMAP" id="MF_00044">
    <property type="entry name" value="Asp_tRNA_synth_type1"/>
    <property type="match status" value="1"/>
</dbReference>
<dbReference type="InterPro" id="IPR004364">
    <property type="entry name" value="Aa-tRNA-synt_II"/>
</dbReference>
<dbReference type="InterPro" id="IPR006195">
    <property type="entry name" value="aa-tRNA-synth_II"/>
</dbReference>
<dbReference type="InterPro" id="IPR045864">
    <property type="entry name" value="aa-tRNA-synth_II/BPL/LPL"/>
</dbReference>
<dbReference type="InterPro" id="IPR004524">
    <property type="entry name" value="Asp-tRNA-ligase_1"/>
</dbReference>
<dbReference type="InterPro" id="IPR047089">
    <property type="entry name" value="Asp-tRNA-ligase_1_N"/>
</dbReference>
<dbReference type="InterPro" id="IPR002312">
    <property type="entry name" value="Asp/Asn-tRNA-synth_IIb"/>
</dbReference>
<dbReference type="InterPro" id="IPR047090">
    <property type="entry name" value="AspRS_core"/>
</dbReference>
<dbReference type="InterPro" id="IPR004115">
    <property type="entry name" value="GAD-like_sf"/>
</dbReference>
<dbReference type="InterPro" id="IPR029351">
    <property type="entry name" value="GAD_dom"/>
</dbReference>
<dbReference type="InterPro" id="IPR012340">
    <property type="entry name" value="NA-bd_OB-fold"/>
</dbReference>
<dbReference type="InterPro" id="IPR004365">
    <property type="entry name" value="NA-bd_OB_tRNA"/>
</dbReference>
<dbReference type="NCBIfam" id="TIGR00459">
    <property type="entry name" value="aspS_bact"/>
    <property type="match status" value="1"/>
</dbReference>
<dbReference type="NCBIfam" id="NF001750">
    <property type="entry name" value="PRK00476.1"/>
    <property type="match status" value="1"/>
</dbReference>
<dbReference type="PANTHER" id="PTHR22594:SF5">
    <property type="entry name" value="ASPARTATE--TRNA LIGASE, MITOCHONDRIAL"/>
    <property type="match status" value="1"/>
</dbReference>
<dbReference type="PANTHER" id="PTHR22594">
    <property type="entry name" value="ASPARTYL/LYSYL-TRNA SYNTHETASE"/>
    <property type="match status" value="1"/>
</dbReference>
<dbReference type="Pfam" id="PF02938">
    <property type="entry name" value="GAD"/>
    <property type="match status" value="1"/>
</dbReference>
<dbReference type="Pfam" id="PF00152">
    <property type="entry name" value="tRNA-synt_2"/>
    <property type="match status" value="1"/>
</dbReference>
<dbReference type="Pfam" id="PF01336">
    <property type="entry name" value="tRNA_anti-codon"/>
    <property type="match status" value="1"/>
</dbReference>
<dbReference type="PRINTS" id="PR01042">
    <property type="entry name" value="TRNASYNTHASP"/>
</dbReference>
<dbReference type="SUPFAM" id="SSF55681">
    <property type="entry name" value="Class II aaRS and biotin synthetases"/>
    <property type="match status" value="1"/>
</dbReference>
<dbReference type="SUPFAM" id="SSF55261">
    <property type="entry name" value="GAD domain-like"/>
    <property type="match status" value="1"/>
</dbReference>
<dbReference type="SUPFAM" id="SSF50249">
    <property type="entry name" value="Nucleic acid-binding proteins"/>
    <property type="match status" value="1"/>
</dbReference>
<dbReference type="PROSITE" id="PS50862">
    <property type="entry name" value="AA_TRNA_LIGASE_II"/>
    <property type="match status" value="1"/>
</dbReference>
<keyword id="KW-0030">Aminoacyl-tRNA synthetase</keyword>
<keyword id="KW-0067">ATP-binding</keyword>
<keyword id="KW-0963">Cytoplasm</keyword>
<keyword id="KW-0436">Ligase</keyword>
<keyword id="KW-0547">Nucleotide-binding</keyword>
<keyword id="KW-0648">Protein biosynthesis</keyword>
<keyword id="KW-1185">Reference proteome</keyword>
<organism>
    <name type="scientific">Bacillus anthracis</name>
    <dbReference type="NCBI Taxonomy" id="1392"/>
    <lineage>
        <taxon>Bacteria</taxon>
        <taxon>Bacillati</taxon>
        <taxon>Bacillota</taxon>
        <taxon>Bacilli</taxon>
        <taxon>Bacillales</taxon>
        <taxon>Bacillaceae</taxon>
        <taxon>Bacillus</taxon>
        <taxon>Bacillus cereus group</taxon>
    </lineage>
</organism>
<gene>
    <name evidence="1" type="primary">aspS</name>
    <name type="synonym">aspS-2</name>
    <name type="ordered locus">BA_4632</name>
    <name type="ordered locus">GBAA_4632</name>
    <name type="ordered locus">BAS4297</name>
</gene>
<name>SYDND_BACAN</name>
<accession>Q81LI7</accession>
<accession>Q6HSZ3</accession>
<accession>Q6KM82</accession>
<evidence type="ECO:0000255" key="1">
    <source>
        <dbReference type="HAMAP-Rule" id="MF_00044"/>
    </source>
</evidence>
<feature type="chain" id="PRO_0000110820" description="Aspartate--tRNA(Asp/Asn) ligase">
    <location>
        <begin position="1"/>
        <end position="591"/>
    </location>
</feature>
<feature type="region of interest" description="Aspartate" evidence="1">
    <location>
        <begin position="200"/>
        <end position="203"/>
    </location>
</feature>
<feature type="binding site" evidence="1">
    <location>
        <position position="176"/>
    </location>
    <ligand>
        <name>L-aspartate</name>
        <dbReference type="ChEBI" id="CHEBI:29991"/>
    </ligand>
</feature>
<feature type="binding site" evidence="1">
    <location>
        <begin position="222"/>
        <end position="224"/>
    </location>
    <ligand>
        <name>ATP</name>
        <dbReference type="ChEBI" id="CHEBI:30616"/>
    </ligand>
</feature>
<feature type="binding site" evidence="1">
    <location>
        <position position="222"/>
    </location>
    <ligand>
        <name>L-aspartate</name>
        <dbReference type="ChEBI" id="CHEBI:29991"/>
    </ligand>
</feature>
<feature type="binding site" evidence="1">
    <location>
        <position position="231"/>
    </location>
    <ligand>
        <name>ATP</name>
        <dbReference type="ChEBI" id="CHEBI:30616"/>
    </ligand>
</feature>
<feature type="binding site" evidence="1">
    <location>
        <position position="450"/>
    </location>
    <ligand>
        <name>L-aspartate</name>
        <dbReference type="ChEBI" id="CHEBI:29991"/>
    </ligand>
</feature>
<feature type="binding site" evidence="1">
    <location>
        <position position="484"/>
    </location>
    <ligand>
        <name>ATP</name>
        <dbReference type="ChEBI" id="CHEBI:30616"/>
    </ligand>
</feature>
<feature type="binding site" evidence="1">
    <location>
        <position position="491"/>
    </location>
    <ligand>
        <name>L-aspartate</name>
        <dbReference type="ChEBI" id="CHEBI:29991"/>
    </ligand>
</feature>
<feature type="binding site" evidence="1">
    <location>
        <begin position="536"/>
        <end position="539"/>
    </location>
    <ligand>
        <name>ATP</name>
        <dbReference type="ChEBI" id="CHEBI:30616"/>
    </ligand>
</feature>
<feature type="site" description="Important for tRNA non-discrimination" evidence="1">
    <location>
        <position position="84"/>
    </location>
</feature>
<sequence length="591" mass="66294">MAERTHACGKVTVEAVGQTVQLKGWVQKRRDLGGLIFIDLRDRTGIVQVVFNPETSKEALEVAETIRSEYVLHVEGTVVERGEGAINDNMATGRIEVQATKVSVLNAAKTTPIIIADDTDASEDVRLKYRYLDLRRPVMFNTFKMRHDVTKTIRNFLDTEEFLEVETPILTKSTPEGARDYLVPSRVHDGEFYALPQSPQLFKQLLMVGGFERYYQVARCFRDEDLRADRQPEFTQIDIEASFLTQDEILDMMERMMTKVMKDAKGVEVSAPFPRMKYADAMARYGSDKPDTRFEMELTDLSEFAAGCGFKVFTSAVESGGQVKAINAKGAASKYSRKDIDALTEFVKVYGAKGLAWLKVEEDGLKGPIAKFFGEEDASVLMNTLEATAGDLLLFVADKKSVVADSLGALRLRLGKELELIDESKFNFLWVTDWPLLEYDEDADRYFAAHHPFTMPFREDVELLETAPEKARAQAYDLVLNGYELGGGSLRIYERDVQEKMFKALGFSQEEAQEQFGFLLEAFEYGTPPHGGIALGLDRLVMLLAGRTNLRDTIAFPKTASASCLLTEAPSPVAEAQLEELNLKLNVKEEK</sequence>
<comment type="function">
    <text evidence="1">Aspartyl-tRNA synthetase with relaxed tRNA specificity since it is able to aspartylate not only its cognate tRNA(Asp) but also tRNA(Asn). Reaction proceeds in two steps: L-aspartate is first activated by ATP to form Asp-AMP and then transferred to the acceptor end of tRNA(Asp/Asn).</text>
</comment>
<comment type="catalytic activity">
    <reaction evidence="1">
        <text>tRNA(Asx) + L-aspartate + ATP = L-aspartyl-tRNA(Asx) + AMP + diphosphate</text>
        <dbReference type="Rhea" id="RHEA:18349"/>
        <dbReference type="Rhea" id="RHEA-COMP:9710"/>
        <dbReference type="Rhea" id="RHEA-COMP:9711"/>
        <dbReference type="ChEBI" id="CHEBI:29991"/>
        <dbReference type="ChEBI" id="CHEBI:30616"/>
        <dbReference type="ChEBI" id="CHEBI:33019"/>
        <dbReference type="ChEBI" id="CHEBI:78442"/>
        <dbReference type="ChEBI" id="CHEBI:78516"/>
        <dbReference type="ChEBI" id="CHEBI:456215"/>
        <dbReference type="EC" id="6.1.1.23"/>
    </reaction>
</comment>
<comment type="subunit">
    <text evidence="1">Homodimer.</text>
</comment>
<comment type="subcellular location">
    <subcellularLocation>
        <location evidence="1">Cytoplasm</location>
    </subcellularLocation>
</comment>
<comment type="similarity">
    <text evidence="1">Belongs to the class-II aminoacyl-tRNA synthetase family. Type 1 subfamily.</text>
</comment>
<protein>
    <recommendedName>
        <fullName evidence="1">Aspartate--tRNA(Asp/Asn) ligase</fullName>
        <ecNumber evidence="1">6.1.1.23</ecNumber>
    </recommendedName>
    <alternativeName>
        <fullName evidence="1">Aspartyl-tRNA synthetase</fullName>
        <shortName evidence="1">AspRS</shortName>
    </alternativeName>
    <alternativeName>
        <fullName evidence="1">Non-discriminating aspartyl-tRNA synthetase</fullName>
        <shortName evidence="1">ND-AspRS</shortName>
    </alternativeName>
</protein>
<proteinExistence type="inferred from homology"/>